<organism>
    <name type="scientific">Escherichia coli O1:K1 / APEC</name>
    <dbReference type="NCBI Taxonomy" id="405955"/>
    <lineage>
        <taxon>Bacteria</taxon>
        <taxon>Pseudomonadati</taxon>
        <taxon>Pseudomonadota</taxon>
        <taxon>Gammaproteobacteria</taxon>
        <taxon>Enterobacterales</taxon>
        <taxon>Enterobacteriaceae</taxon>
        <taxon>Escherichia</taxon>
    </lineage>
</organism>
<reference key="1">
    <citation type="journal article" date="2007" name="J. Bacteriol.">
        <title>The genome sequence of avian pathogenic Escherichia coli strain O1:K1:H7 shares strong similarities with human extraintestinal pathogenic E. coli genomes.</title>
        <authorList>
            <person name="Johnson T.J."/>
            <person name="Kariyawasam S."/>
            <person name="Wannemuehler Y."/>
            <person name="Mangiamele P."/>
            <person name="Johnson S.J."/>
            <person name="Doetkott C."/>
            <person name="Skyberg J.A."/>
            <person name="Lynne A.M."/>
            <person name="Johnson J.R."/>
            <person name="Nolan L.K."/>
        </authorList>
    </citation>
    <scope>NUCLEOTIDE SEQUENCE [LARGE SCALE GENOMIC DNA]</scope>
</reference>
<accession>A1AC22</accession>
<keyword id="KW-0963">Cytoplasm</keyword>
<keyword id="KW-0227">DNA damage</keyword>
<keyword id="KW-0233">DNA recombination</keyword>
<keyword id="KW-0234">DNA repair</keyword>
<keyword id="KW-0238">DNA-binding</keyword>
<keyword id="KW-1185">Reference proteome</keyword>
<keyword id="KW-0742">SOS response</keyword>
<name>RUVA_ECOK1</name>
<comment type="function">
    <text evidence="1">The RuvA-RuvB-RuvC complex processes Holliday junction (HJ) DNA during genetic recombination and DNA repair, while the RuvA-RuvB complex plays an important role in the rescue of blocked DNA replication forks via replication fork reversal (RFR). RuvA specifically binds to HJ cruciform DNA, conferring on it an open structure. The RuvB hexamer acts as an ATP-dependent pump, pulling dsDNA into and through the RuvAB complex. HJ branch migration allows RuvC to scan DNA until it finds its consensus sequence, where it cleaves and resolves the cruciform DNA.</text>
</comment>
<comment type="subunit">
    <text evidence="1">Homotetramer. Forms an RuvA(8)-RuvB(12)-Holliday junction (HJ) complex. HJ DNA is sandwiched between 2 RuvA tetramers; dsDNA enters through RuvA and exits via RuvB. An RuvB hexamer assembles on each DNA strand where it exits the tetramer. Each RuvB hexamer is contacted by two RuvA subunits (via domain III) on 2 adjacent RuvB subunits; this complex drives branch migration. In the full resolvosome a probable DNA-RuvA(4)-RuvB(12)-RuvC(2) complex forms which resolves the HJ.</text>
</comment>
<comment type="subcellular location">
    <subcellularLocation>
        <location evidence="1">Cytoplasm</location>
    </subcellularLocation>
</comment>
<comment type="domain">
    <text evidence="1">Has three domains with a flexible linker between the domains II and III and assumes an 'L' shape. Domain III is highly mobile and contacts RuvB.</text>
</comment>
<comment type="similarity">
    <text evidence="1">Belongs to the RuvA family.</text>
</comment>
<gene>
    <name evidence="1" type="primary">ruvA</name>
    <name type="ordered locus">Ecok1_17180</name>
    <name type="ORF">APECO1_911</name>
</gene>
<dbReference type="EMBL" id="CP000468">
    <property type="protein sequence ID" value="ABJ01212.1"/>
    <property type="molecule type" value="Genomic_DNA"/>
</dbReference>
<dbReference type="RefSeq" id="WP_000580323.1">
    <property type="nucleotide sequence ID" value="NZ_CADILS010000034.1"/>
</dbReference>
<dbReference type="SMR" id="A1AC22"/>
<dbReference type="GeneID" id="75057740"/>
<dbReference type="KEGG" id="ecv:APECO1_911"/>
<dbReference type="HOGENOM" id="CLU_087936_0_0_6"/>
<dbReference type="Proteomes" id="UP000008216">
    <property type="component" value="Chromosome"/>
</dbReference>
<dbReference type="GO" id="GO:0005737">
    <property type="term" value="C:cytoplasm"/>
    <property type="evidence" value="ECO:0007669"/>
    <property type="project" value="UniProtKB-SubCell"/>
</dbReference>
<dbReference type="GO" id="GO:0009379">
    <property type="term" value="C:Holliday junction helicase complex"/>
    <property type="evidence" value="ECO:0007669"/>
    <property type="project" value="InterPro"/>
</dbReference>
<dbReference type="GO" id="GO:0048476">
    <property type="term" value="C:Holliday junction resolvase complex"/>
    <property type="evidence" value="ECO:0007669"/>
    <property type="project" value="UniProtKB-UniRule"/>
</dbReference>
<dbReference type="GO" id="GO:0005524">
    <property type="term" value="F:ATP binding"/>
    <property type="evidence" value="ECO:0007669"/>
    <property type="project" value="InterPro"/>
</dbReference>
<dbReference type="GO" id="GO:0000400">
    <property type="term" value="F:four-way junction DNA binding"/>
    <property type="evidence" value="ECO:0007669"/>
    <property type="project" value="UniProtKB-UniRule"/>
</dbReference>
<dbReference type="GO" id="GO:0009378">
    <property type="term" value="F:four-way junction helicase activity"/>
    <property type="evidence" value="ECO:0007669"/>
    <property type="project" value="InterPro"/>
</dbReference>
<dbReference type="GO" id="GO:0006310">
    <property type="term" value="P:DNA recombination"/>
    <property type="evidence" value="ECO:0007669"/>
    <property type="project" value="UniProtKB-UniRule"/>
</dbReference>
<dbReference type="GO" id="GO:0006281">
    <property type="term" value="P:DNA repair"/>
    <property type="evidence" value="ECO:0007669"/>
    <property type="project" value="UniProtKB-UniRule"/>
</dbReference>
<dbReference type="GO" id="GO:0009432">
    <property type="term" value="P:SOS response"/>
    <property type="evidence" value="ECO:0007669"/>
    <property type="project" value="UniProtKB-UniRule"/>
</dbReference>
<dbReference type="CDD" id="cd14332">
    <property type="entry name" value="UBA_RuvA_C"/>
    <property type="match status" value="1"/>
</dbReference>
<dbReference type="FunFam" id="1.10.150.20:FF:000012">
    <property type="entry name" value="Holliday junction ATP-dependent DNA helicase RuvA"/>
    <property type="match status" value="1"/>
</dbReference>
<dbReference type="FunFam" id="1.10.8.10:FF:000008">
    <property type="entry name" value="Holliday junction ATP-dependent DNA helicase RuvA"/>
    <property type="match status" value="1"/>
</dbReference>
<dbReference type="FunFam" id="2.40.50.140:FF:000083">
    <property type="entry name" value="Holliday junction ATP-dependent DNA helicase RuvA"/>
    <property type="match status" value="1"/>
</dbReference>
<dbReference type="Gene3D" id="1.10.150.20">
    <property type="entry name" value="5' to 3' exonuclease, C-terminal subdomain"/>
    <property type="match status" value="1"/>
</dbReference>
<dbReference type="Gene3D" id="1.10.8.10">
    <property type="entry name" value="DNA helicase RuvA subunit, C-terminal domain"/>
    <property type="match status" value="1"/>
</dbReference>
<dbReference type="Gene3D" id="2.40.50.140">
    <property type="entry name" value="Nucleic acid-binding proteins"/>
    <property type="match status" value="1"/>
</dbReference>
<dbReference type="HAMAP" id="MF_00031">
    <property type="entry name" value="DNA_HJ_migration_RuvA"/>
    <property type="match status" value="1"/>
</dbReference>
<dbReference type="InterPro" id="IPR013849">
    <property type="entry name" value="DNA_helicase_Holl-junc_RuvA_I"/>
</dbReference>
<dbReference type="InterPro" id="IPR003583">
    <property type="entry name" value="Hlx-hairpin-Hlx_DNA-bd_motif"/>
</dbReference>
<dbReference type="InterPro" id="IPR012340">
    <property type="entry name" value="NA-bd_OB-fold"/>
</dbReference>
<dbReference type="InterPro" id="IPR000085">
    <property type="entry name" value="RuvA"/>
</dbReference>
<dbReference type="InterPro" id="IPR010994">
    <property type="entry name" value="RuvA_2-like"/>
</dbReference>
<dbReference type="InterPro" id="IPR011114">
    <property type="entry name" value="RuvA_C"/>
</dbReference>
<dbReference type="InterPro" id="IPR036267">
    <property type="entry name" value="RuvA_C_sf"/>
</dbReference>
<dbReference type="NCBIfam" id="TIGR00084">
    <property type="entry name" value="ruvA"/>
    <property type="match status" value="1"/>
</dbReference>
<dbReference type="Pfam" id="PF14520">
    <property type="entry name" value="HHH_5"/>
    <property type="match status" value="1"/>
</dbReference>
<dbReference type="Pfam" id="PF07499">
    <property type="entry name" value="RuvA_C"/>
    <property type="match status" value="1"/>
</dbReference>
<dbReference type="Pfam" id="PF01330">
    <property type="entry name" value="RuvA_N"/>
    <property type="match status" value="1"/>
</dbReference>
<dbReference type="SMART" id="SM00278">
    <property type="entry name" value="HhH1"/>
    <property type="match status" value="2"/>
</dbReference>
<dbReference type="SUPFAM" id="SSF46929">
    <property type="entry name" value="DNA helicase RuvA subunit, C-terminal domain"/>
    <property type="match status" value="1"/>
</dbReference>
<dbReference type="SUPFAM" id="SSF50249">
    <property type="entry name" value="Nucleic acid-binding proteins"/>
    <property type="match status" value="1"/>
</dbReference>
<dbReference type="SUPFAM" id="SSF47781">
    <property type="entry name" value="RuvA domain 2-like"/>
    <property type="match status" value="1"/>
</dbReference>
<sequence>MIGRLRGIIIEKQPPLVLIEVGGVGYEVHMPMTCFYELPEAGQEAIVFTHFVVREDAQLLYGFNNKQERTLFKELIKTNGVGPKLALAILSGMSAQQFVNAVEREEVGALVKLPGIGKKTAERLIVEMKDRFKGLHGDLFTPAADLVLTSPASPATDDAEQEAVAALVALGYKPQEASRMVSKIARPDASSETLIREALRAAL</sequence>
<feature type="chain" id="PRO_1000002442" description="Holliday junction branch migration complex subunit RuvA">
    <location>
        <begin position="1"/>
        <end position="203"/>
    </location>
</feature>
<feature type="region of interest" description="Domain I" evidence="1">
    <location>
        <begin position="1"/>
        <end position="64"/>
    </location>
</feature>
<feature type="region of interest" description="Domain II" evidence="1">
    <location>
        <begin position="65"/>
        <end position="142"/>
    </location>
</feature>
<feature type="region of interest" description="Flexible linker" evidence="1">
    <location>
        <begin position="143"/>
        <end position="154"/>
    </location>
</feature>
<feature type="region of interest" description="Domain III" evidence="1">
    <location>
        <begin position="155"/>
        <end position="203"/>
    </location>
</feature>
<proteinExistence type="inferred from homology"/>
<protein>
    <recommendedName>
        <fullName evidence="1">Holliday junction branch migration complex subunit RuvA</fullName>
    </recommendedName>
</protein>
<evidence type="ECO:0000255" key="1">
    <source>
        <dbReference type="HAMAP-Rule" id="MF_00031"/>
    </source>
</evidence>